<evidence type="ECO:0000255" key="1">
    <source>
        <dbReference type="HAMAP-Rule" id="MF_01318"/>
    </source>
</evidence>
<evidence type="ECO:0000305" key="2"/>
<dbReference type="EMBL" id="CP000789">
    <property type="protein sequence ID" value="ABU69268.1"/>
    <property type="molecule type" value="Genomic_DNA"/>
</dbReference>
<dbReference type="RefSeq" id="WP_005384683.1">
    <property type="nucleotide sequence ID" value="NC_022269.1"/>
</dbReference>
<dbReference type="SMR" id="A7MXE3"/>
<dbReference type="GeneID" id="83583534"/>
<dbReference type="KEGG" id="vha:VIBHAR_00228"/>
<dbReference type="PATRIC" id="fig|338187.25.peg.2323"/>
<dbReference type="Proteomes" id="UP000008152">
    <property type="component" value="Chromosome I"/>
</dbReference>
<dbReference type="GO" id="GO:0022625">
    <property type="term" value="C:cytosolic large ribosomal subunit"/>
    <property type="evidence" value="ECO:0007669"/>
    <property type="project" value="TreeGrafter"/>
</dbReference>
<dbReference type="GO" id="GO:0019843">
    <property type="term" value="F:rRNA binding"/>
    <property type="evidence" value="ECO:0007669"/>
    <property type="project" value="UniProtKB-UniRule"/>
</dbReference>
<dbReference type="GO" id="GO:0003735">
    <property type="term" value="F:structural constituent of ribosome"/>
    <property type="evidence" value="ECO:0007669"/>
    <property type="project" value="InterPro"/>
</dbReference>
<dbReference type="GO" id="GO:0000049">
    <property type="term" value="F:tRNA binding"/>
    <property type="evidence" value="ECO:0007669"/>
    <property type="project" value="UniProtKB-KW"/>
</dbReference>
<dbReference type="GO" id="GO:0006417">
    <property type="term" value="P:regulation of translation"/>
    <property type="evidence" value="ECO:0007669"/>
    <property type="project" value="UniProtKB-KW"/>
</dbReference>
<dbReference type="GO" id="GO:0006412">
    <property type="term" value="P:translation"/>
    <property type="evidence" value="ECO:0007669"/>
    <property type="project" value="UniProtKB-UniRule"/>
</dbReference>
<dbReference type="CDD" id="cd00403">
    <property type="entry name" value="Ribosomal_L1"/>
    <property type="match status" value="1"/>
</dbReference>
<dbReference type="FunFam" id="3.40.50.790:FF:000001">
    <property type="entry name" value="50S ribosomal protein L1"/>
    <property type="match status" value="1"/>
</dbReference>
<dbReference type="Gene3D" id="3.30.190.20">
    <property type="match status" value="1"/>
</dbReference>
<dbReference type="Gene3D" id="3.40.50.790">
    <property type="match status" value="1"/>
</dbReference>
<dbReference type="HAMAP" id="MF_01318_B">
    <property type="entry name" value="Ribosomal_uL1_B"/>
    <property type="match status" value="1"/>
</dbReference>
<dbReference type="InterPro" id="IPR005878">
    <property type="entry name" value="Ribosom_uL1_bac-type"/>
</dbReference>
<dbReference type="InterPro" id="IPR002143">
    <property type="entry name" value="Ribosomal_uL1"/>
</dbReference>
<dbReference type="InterPro" id="IPR023674">
    <property type="entry name" value="Ribosomal_uL1-like"/>
</dbReference>
<dbReference type="InterPro" id="IPR028364">
    <property type="entry name" value="Ribosomal_uL1/biogenesis"/>
</dbReference>
<dbReference type="InterPro" id="IPR016095">
    <property type="entry name" value="Ribosomal_uL1_3-a/b-sand"/>
</dbReference>
<dbReference type="InterPro" id="IPR023673">
    <property type="entry name" value="Ribosomal_uL1_CS"/>
</dbReference>
<dbReference type="NCBIfam" id="TIGR01169">
    <property type="entry name" value="rplA_bact"/>
    <property type="match status" value="1"/>
</dbReference>
<dbReference type="PANTHER" id="PTHR36427">
    <property type="entry name" value="54S RIBOSOMAL PROTEIN L1, MITOCHONDRIAL"/>
    <property type="match status" value="1"/>
</dbReference>
<dbReference type="PANTHER" id="PTHR36427:SF3">
    <property type="entry name" value="LARGE RIBOSOMAL SUBUNIT PROTEIN UL1M"/>
    <property type="match status" value="1"/>
</dbReference>
<dbReference type="Pfam" id="PF00687">
    <property type="entry name" value="Ribosomal_L1"/>
    <property type="match status" value="1"/>
</dbReference>
<dbReference type="PIRSF" id="PIRSF002155">
    <property type="entry name" value="Ribosomal_L1"/>
    <property type="match status" value="1"/>
</dbReference>
<dbReference type="SUPFAM" id="SSF56808">
    <property type="entry name" value="Ribosomal protein L1"/>
    <property type="match status" value="1"/>
</dbReference>
<dbReference type="PROSITE" id="PS01199">
    <property type="entry name" value="RIBOSOMAL_L1"/>
    <property type="match status" value="1"/>
</dbReference>
<protein>
    <recommendedName>
        <fullName evidence="1">Large ribosomal subunit protein uL1</fullName>
    </recommendedName>
    <alternativeName>
        <fullName evidence="2">50S ribosomal protein L1</fullName>
    </alternativeName>
</protein>
<sequence>MAKLTKRMRVIREKVDVTKEYEINEAVALLQELATAKFVESVDVAVNLGIDARKSDQNVRGATVLPHGTGREIRVAVFTQGANAEAAKEAGADIVGMEDLAEQVKKGEMNFDVVVASPDAMRVVGQLGTILGPRGLMPNPKVGTVTPNVAEAVKNAKAGQVRYRNDKNGIIHTTIGKANFSAEQIKENLEALLVALKKAKPSSAKGTFLKKVSISTTMGAGVAVDQASLNTQA</sequence>
<accession>A7MXE3</accession>
<keyword id="KW-0678">Repressor</keyword>
<keyword id="KW-0687">Ribonucleoprotein</keyword>
<keyword id="KW-0689">Ribosomal protein</keyword>
<keyword id="KW-0694">RNA-binding</keyword>
<keyword id="KW-0699">rRNA-binding</keyword>
<keyword id="KW-0810">Translation regulation</keyword>
<keyword id="KW-0820">tRNA-binding</keyword>
<reference key="1">
    <citation type="submission" date="2007-08" db="EMBL/GenBank/DDBJ databases">
        <authorList>
            <consortium name="The Vibrio harveyi Genome Sequencing Project"/>
            <person name="Bassler B."/>
            <person name="Clifton S.W."/>
            <person name="Fulton L."/>
            <person name="Delehaunty K."/>
            <person name="Fronick C."/>
            <person name="Harrison M."/>
            <person name="Markivic C."/>
            <person name="Fulton R."/>
            <person name="Tin-Wollam A.-M."/>
            <person name="Shah N."/>
            <person name="Pepin K."/>
            <person name="Nash W."/>
            <person name="Thiruvilangam P."/>
            <person name="Bhonagiri V."/>
            <person name="Waters C."/>
            <person name="Tu K.C."/>
            <person name="Irgon J."/>
            <person name="Wilson R.K."/>
        </authorList>
    </citation>
    <scope>NUCLEOTIDE SEQUENCE [LARGE SCALE GENOMIC DNA]</scope>
    <source>
        <strain>ATCC BAA-1116 / BB120</strain>
    </source>
</reference>
<comment type="function">
    <text evidence="1">Binds directly to 23S rRNA. The L1 stalk is quite mobile in the ribosome, and is involved in E site tRNA release.</text>
</comment>
<comment type="function">
    <text evidence="1">Protein L1 is also a translational repressor protein, it controls the translation of the L11 operon by binding to its mRNA.</text>
</comment>
<comment type="subunit">
    <text evidence="1">Part of the 50S ribosomal subunit.</text>
</comment>
<comment type="similarity">
    <text evidence="1">Belongs to the universal ribosomal protein uL1 family.</text>
</comment>
<gene>
    <name evidence="1" type="primary">rplA</name>
    <name type="ordered locus">VIBHAR_00228</name>
</gene>
<proteinExistence type="inferred from homology"/>
<name>RL1_VIBC1</name>
<organism>
    <name type="scientific">Vibrio campbellii (strain ATCC BAA-1116)</name>
    <dbReference type="NCBI Taxonomy" id="2902295"/>
    <lineage>
        <taxon>Bacteria</taxon>
        <taxon>Pseudomonadati</taxon>
        <taxon>Pseudomonadota</taxon>
        <taxon>Gammaproteobacteria</taxon>
        <taxon>Vibrionales</taxon>
        <taxon>Vibrionaceae</taxon>
        <taxon>Vibrio</taxon>
    </lineage>
</organism>
<feature type="chain" id="PRO_1000051928" description="Large ribosomal subunit protein uL1">
    <location>
        <begin position="1"/>
        <end position="233"/>
    </location>
</feature>